<proteinExistence type="evidence at transcript level"/>
<protein>
    <recommendedName>
        <fullName>Fructose-bisphosphate aldolase C-B</fullName>
        <ecNumber>4.1.2.13</ecNumber>
    </recommendedName>
    <alternativeName>
        <fullName>Brain-type aldolase-B</fullName>
    </alternativeName>
</protein>
<reference key="1">
    <citation type="journal article" date="2002" name="J. Mol. Evol.">
        <title>Negative charge correlates with neural expression in vertebrate aldolase isozymes.</title>
        <authorList>
            <person name="Merritt T.J.S."/>
            <person name="Quattro J.M."/>
        </authorList>
    </citation>
    <scope>NUCLEOTIDE SEQUENCE [MRNA]</scope>
</reference>
<reference key="2">
    <citation type="submission" date="2003-06" db="EMBL/GenBank/DDBJ databases">
        <authorList>
            <consortium name="NIH - Zebrafish Gene Collection (ZGC) project"/>
        </authorList>
    </citation>
    <scope>NUCLEOTIDE SEQUENCE [LARGE SCALE MRNA]</scope>
    <source>
        <tissue>Kidney</tissue>
    </source>
</reference>
<feature type="initiator methionine" description="Removed" evidence="1">
    <location>
        <position position="1"/>
    </location>
</feature>
<feature type="chain" id="PRO_0000291612" description="Fructose-bisphosphate aldolase C-B">
    <location>
        <begin position="2"/>
        <end position="363"/>
    </location>
</feature>
<feature type="active site" description="Proton acceptor" evidence="1">
    <location>
        <position position="188"/>
    </location>
</feature>
<feature type="active site" description="Schiff-base intermediate with dihydroxyacetone-P" evidence="1">
    <location>
        <position position="230"/>
    </location>
</feature>
<feature type="binding site" evidence="1">
    <location>
        <position position="56"/>
    </location>
    <ligand>
        <name>substrate</name>
    </ligand>
</feature>
<feature type="binding site" evidence="1">
    <location>
        <position position="147"/>
    </location>
    <ligand>
        <name>substrate</name>
    </ligand>
</feature>
<feature type="site" description="Necessary for preference for fructose 1,6-bisphosphate over fructose 1-phosphate" evidence="1">
    <location>
        <position position="363"/>
    </location>
</feature>
<name>ALDCB_DANRE</name>
<gene>
    <name type="primary">aldocb</name>
    <name type="synonym">aldoc</name>
</gene>
<comment type="catalytic activity">
    <reaction>
        <text>beta-D-fructose 1,6-bisphosphate = D-glyceraldehyde 3-phosphate + dihydroxyacetone phosphate</text>
        <dbReference type="Rhea" id="RHEA:14729"/>
        <dbReference type="ChEBI" id="CHEBI:32966"/>
        <dbReference type="ChEBI" id="CHEBI:57642"/>
        <dbReference type="ChEBI" id="CHEBI:59776"/>
        <dbReference type="EC" id="4.1.2.13"/>
    </reaction>
</comment>
<comment type="pathway">
    <text>Carbohydrate degradation; glycolysis; D-glyceraldehyde 3-phosphate and glycerone phosphate from D-glucose: step 4/4.</text>
</comment>
<comment type="subunit">
    <text evidence="1">Homotetramer.</text>
</comment>
<comment type="similarity">
    <text evidence="2">Belongs to the class I fructose-bisphosphate aldolase family.</text>
</comment>
<accession>Q8JH70</accession>
<evidence type="ECO:0000250" key="1"/>
<evidence type="ECO:0000305" key="2"/>
<dbReference type="EC" id="4.1.2.13"/>
<dbReference type="EMBL" id="AF533647">
    <property type="protein sequence ID" value="AAN04478.1"/>
    <property type="molecule type" value="mRNA"/>
</dbReference>
<dbReference type="EMBL" id="BC053192">
    <property type="protein sequence ID" value="AAH53192.1"/>
    <property type="molecule type" value="mRNA"/>
</dbReference>
<dbReference type="RefSeq" id="NP_919365.1">
    <property type="nucleotide sequence ID" value="NM_194384.1"/>
</dbReference>
<dbReference type="SMR" id="Q8JH70"/>
<dbReference type="FunCoup" id="Q8JH70">
    <property type="interactions" value="1172"/>
</dbReference>
<dbReference type="STRING" id="7955.ENSDARP00000151215"/>
<dbReference type="PaxDb" id="7955-ENSDARP00000024492"/>
<dbReference type="Ensembl" id="ENSDART00000026766">
    <property type="protein sequence ID" value="ENSDARP00000024492"/>
    <property type="gene ID" value="ENSDARG00000019702"/>
</dbReference>
<dbReference type="Ensembl" id="ENSDART00000183995">
    <property type="protein sequence ID" value="ENSDARP00000151215"/>
    <property type="gene ID" value="ENSDARG00000019702"/>
</dbReference>
<dbReference type="GeneID" id="369193"/>
<dbReference type="KEGG" id="dre:369193"/>
<dbReference type="AGR" id="ZFIN:ZDB-GENE-030821-1"/>
<dbReference type="CTD" id="369193"/>
<dbReference type="ZFIN" id="ZDB-GENE-030821-1">
    <property type="gene designation" value="aldocb"/>
</dbReference>
<dbReference type="eggNOG" id="KOG1557">
    <property type="taxonomic scope" value="Eukaryota"/>
</dbReference>
<dbReference type="HOGENOM" id="CLU_031243_0_0_1"/>
<dbReference type="InParanoid" id="Q8JH70"/>
<dbReference type="OMA" id="GDAMQKW"/>
<dbReference type="OrthoDB" id="36455at2759"/>
<dbReference type="PhylomeDB" id="Q8JH70"/>
<dbReference type="TreeFam" id="TF314203"/>
<dbReference type="Reactome" id="R-DRE-6798695">
    <property type="pathway name" value="Neutrophil degranulation"/>
</dbReference>
<dbReference type="Reactome" id="R-DRE-70171">
    <property type="pathway name" value="Glycolysis"/>
</dbReference>
<dbReference type="Reactome" id="R-DRE-70263">
    <property type="pathway name" value="Gluconeogenesis"/>
</dbReference>
<dbReference type="UniPathway" id="UPA00109">
    <property type="reaction ID" value="UER00183"/>
</dbReference>
<dbReference type="PRO" id="PR:Q8JH70"/>
<dbReference type="Proteomes" id="UP000000437">
    <property type="component" value="Chromosome 21"/>
</dbReference>
<dbReference type="Bgee" id="ENSDARG00000019702">
    <property type="expression patterns" value="Expressed in bone element and 48 other cell types or tissues"/>
</dbReference>
<dbReference type="ExpressionAtlas" id="Q8JH70">
    <property type="expression patterns" value="baseline and differential"/>
</dbReference>
<dbReference type="GO" id="GO:0005829">
    <property type="term" value="C:cytosol"/>
    <property type="evidence" value="ECO:0000318"/>
    <property type="project" value="GO_Central"/>
</dbReference>
<dbReference type="GO" id="GO:0004332">
    <property type="term" value="F:fructose-bisphosphate aldolase activity"/>
    <property type="evidence" value="ECO:0000318"/>
    <property type="project" value="GO_Central"/>
</dbReference>
<dbReference type="GO" id="GO:0030388">
    <property type="term" value="P:fructose 1,6-bisphosphate metabolic process"/>
    <property type="evidence" value="ECO:0000318"/>
    <property type="project" value="GO_Central"/>
</dbReference>
<dbReference type="GO" id="GO:0006096">
    <property type="term" value="P:glycolytic process"/>
    <property type="evidence" value="ECO:0000318"/>
    <property type="project" value="GO_Central"/>
</dbReference>
<dbReference type="CDD" id="cd00948">
    <property type="entry name" value="FBP_aldolase_I_a"/>
    <property type="match status" value="1"/>
</dbReference>
<dbReference type="FunFam" id="3.20.20.70:FF:000021">
    <property type="entry name" value="Fructose-bisphosphate aldolase"/>
    <property type="match status" value="1"/>
</dbReference>
<dbReference type="Gene3D" id="3.20.20.70">
    <property type="entry name" value="Aldolase class I"/>
    <property type="match status" value="1"/>
</dbReference>
<dbReference type="InterPro" id="IPR029768">
    <property type="entry name" value="Aldolase_I_AS"/>
</dbReference>
<dbReference type="InterPro" id="IPR013785">
    <property type="entry name" value="Aldolase_TIM"/>
</dbReference>
<dbReference type="InterPro" id="IPR000741">
    <property type="entry name" value="FBA_I"/>
</dbReference>
<dbReference type="NCBIfam" id="NF033379">
    <property type="entry name" value="FrucBisAld_I"/>
    <property type="match status" value="1"/>
</dbReference>
<dbReference type="PANTHER" id="PTHR11627">
    <property type="entry name" value="FRUCTOSE-BISPHOSPHATE ALDOLASE"/>
    <property type="match status" value="1"/>
</dbReference>
<dbReference type="Pfam" id="PF00274">
    <property type="entry name" value="Glycolytic"/>
    <property type="match status" value="1"/>
</dbReference>
<dbReference type="SUPFAM" id="SSF51569">
    <property type="entry name" value="Aldolase"/>
    <property type="match status" value="1"/>
</dbReference>
<dbReference type="PROSITE" id="PS00158">
    <property type="entry name" value="ALDOLASE_CLASS_I"/>
    <property type="match status" value="1"/>
</dbReference>
<organism>
    <name type="scientific">Danio rerio</name>
    <name type="common">Zebrafish</name>
    <name type="synonym">Brachydanio rerio</name>
    <dbReference type="NCBI Taxonomy" id="7955"/>
    <lineage>
        <taxon>Eukaryota</taxon>
        <taxon>Metazoa</taxon>
        <taxon>Chordata</taxon>
        <taxon>Craniata</taxon>
        <taxon>Vertebrata</taxon>
        <taxon>Euteleostomi</taxon>
        <taxon>Actinopterygii</taxon>
        <taxon>Neopterygii</taxon>
        <taxon>Teleostei</taxon>
        <taxon>Ostariophysi</taxon>
        <taxon>Cypriniformes</taxon>
        <taxon>Danionidae</taxon>
        <taxon>Danioninae</taxon>
        <taxon>Danio</taxon>
    </lineage>
</organism>
<keyword id="KW-0324">Glycolysis</keyword>
<keyword id="KW-0456">Lyase</keyword>
<keyword id="KW-1185">Reference proteome</keyword>
<keyword id="KW-0704">Schiff base</keyword>
<sequence>MTHQYPALTAEQKKELQDIAQRIVAPGKGILAADESTGSMAKRLNPIGVENTEENRRLYRQLLFSADERIDKCIGGVIFFHETLYQNTDDGTNFAQLIKDRGIVVGIKVDKGVVPLAGTNGETTTQGLDGLSERCAQYKKDGADFAKWRSVLKISDTTPSELAIMENANVLARYASICQQNGIVPIVEPEILPDGEHDLKRCQYVTEKVLAACYKALSDHHVYLEGTLLKPNMVTAGHSCPTKYSSEEIAMATVTALRRTVPPAVSGVTFLSGGQSEEEASVNLNSINNCPLAKPWPLTFSYGRALQASALSAWRGAKSNEKAATEEFIKRAEANGLAAQGKYVSSGTCGAAGQSLYVANHAY</sequence>